<feature type="initiator methionine" description="Removed" evidence="1">
    <location>
        <position position="1"/>
    </location>
</feature>
<feature type="chain" id="PRO_0000057577" description="Gamma-crystallin M1">
    <location>
        <begin position="2"/>
        <end position="175"/>
    </location>
</feature>
<feature type="domain" description="Beta/gamma crystallin 'Greek key' 1" evidence="2">
    <location>
        <begin position="2"/>
        <end position="40"/>
    </location>
</feature>
<feature type="domain" description="Beta/gamma crystallin 'Greek key' 2" evidence="2">
    <location>
        <begin position="41"/>
        <end position="86"/>
    </location>
</feature>
<feature type="domain" description="Beta/gamma crystallin 'Greek key' 3" evidence="2">
    <location>
        <begin position="89"/>
        <end position="121"/>
    </location>
</feature>
<feature type="domain" description="Beta/gamma crystallin 'Greek key' 4" evidence="2">
    <location>
        <begin position="130"/>
        <end position="172"/>
    </location>
</feature>
<comment type="function">
    <text>Crystallins are the dominant structural components of the vertebrate eye lens.</text>
</comment>
<comment type="subunit">
    <text evidence="1">Monomer.</text>
</comment>
<comment type="domain">
    <text>Has a two-domain beta-structure, folded into four very similar Greek key motifs.</text>
</comment>
<comment type="similarity">
    <text evidence="3">Belongs to the beta/gamma-crystallin family.</text>
</comment>
<dbReference type="EMBL" id="X79228">
    <property type="protein sequence ID" value="CAA55810.1"/>
    <property type="molecule type" value="mRNA"/>
</dbReference>
<dbReference type="PIR" id="S45014">
    <property type="entry name" value="S45014"/>
</dbReference>
<dbReference type="SMR" id="P48648"/>
<dbReference type="GO" id="GO:0005212">
    <property type="term" value="F:structural constituent of eye lens"/>
    <property type="evidence" value="ECO:0007669"/>
    <property type="project" value="UniProtKB-KW"/>
</dbReference>
<dbReference type="GO" id="GO:0002088">
    <property type="term" value="P:lens development in camera-type eye"/>
    <property type="evidence" value="ECO:0007669"/>
    <property type="project" value="TreeGrafter"/>
</dbReference>
<dbReference type="GO" id="GO:0007601">
    <property type="term" value="P:visual perception"/>
    <property type="evidence" value="ECO:0007669"/>
    <property type="project" value="TreeGrafter"/>
</dbReference>
<dbReference type="FunFam" id="2.60.20.10:FF:000001">
    <property type="entry name" value="Crystallin gamma S"/>
    <property type="match status" value="1"/>
</dbReference>
<dbReference type="FunFam" id="2.60.20.10:FF:000003">
    <property type="entry name" value="Crystallin gamma S"/>
    <property type="match status" value="1"/>
</dbReference>
<dbReference type="Gene3D" id="2.60.20.10">
    <property type="entry name" value="Crystallins"/>
    <property type="match status" value="2"/>
</dbReference>
<dbReference type="InterPro" id="IPR050252">
    <property type="entry name" value="Beta/Gamma-Crystallin"/>
</dbReference>
<dbReference type="InterPro" id="IPR001064">
    <property type="entry name" value="Beta/gamma_crystallin"/>
</dbReference>
<dbReference type="InterPro" id="IPR011024">
    <property type="entry name" value="G_crystallin-like"/>
</dbReference>
<dbReference type="PANTHER" id="PTHR11818">
    <property type="entry name" value="BETA/GAMMA CRYSTALLIN"/>
    <property type="match status" value="1"/>
</dbReference>
<dbReference type="PANTHER" id="PTHR11818:SF139">
    <property type="entry name" value="CRYSTALLIN, GAMMA M1-RELATED"/>
    <property type="match status" value="1"/>
</dbReference>
<dbReference type="Pfam" id="PF00030">
    <property type="entry name" value="Crystall"/>
    <property type="match status" value="2"/>
</dbReference>
<dbReference type="PRINTS" id="PR01367">
    <property type="entry name" value="BGCRYSTALLIN"/>
</dbReference>
<dbReference type="SMART" id="SM00247">
    <property type="entry name" value="XTALbg"/>
    <property type="match status" value="2"/>
</dbReference>
<dbReference type="SUPFAM" id="SSF49695">
    <property type="entry name" value="gamma-Crystallin-like"/>
    <property type="match status" value="1"/>
</dbReference>
<dbReference type="PROSITE" id="PS50915">
    <property type="entry name" value="CRYSTALLIN_BETA_GAMMA"/>
    <property type="match status" value="4"/>
</dbReference>
<reference key="1">
    <citation type="submission" date="1994-05" db="EMBL/GenBank/DDBJ databases">
        <authorList>
            <person name="Chuang M.-H."/>
            <person name="Pan F.-M."/>
            <person name="Chiou S.-H."/>
        </authorList>
    </citation>
    <scope>NUCLEOTIDE SEQUENCE [MRNA]</scope>
    <source>
        <tissue>Lens</tissue>
    </source>
</reference>
<name>CRGM1_CHIID</name>
<evidence type="ECO:0000250" key="1"/>
<evidence type="ECO:0000255" key="2">
    <source>
        <dbReference type="PROSITE-ProRule" id="PRU00028"/>
    </source>
</evidence>
<evidence type="ECO:0000305" key="3"/>
<organism>
    <name type="scientific">Chiloscyllium indicum</name>
    <name type="common">Slender bamboo shark</name>
    <name type="synonym">Chiloscyllium colax</name>
    <dbReference type="NCBI Taxonomy" id="443761"/>
    <lineage>
        <taxon>Eukaryota</taxon>
        <taxon>Metazoa</taxon>
        <taxon>Chordata</taxon>
        <taxon>Craniata</taxon>
        <taxon>Vertebrata</taxon>
        <taxon>Chondrichthyes</taxon>
        <taxon>Elasmobranchii</taxon>
        <taxon>Galeomorphii</taxon>
        <taxon>Galeoidea</taxon>
        <taxon>Orectolobiformes</taxon>
        <taxon>Hemiscylliidae</taxon>
        <taxon>Chiloscyllium</taxon>
    </lineage>
</organism>
<proteinExistence type="evidence at transcript level"/>
<sequence>MGKIIFYEDRNFQGRSYECMSDCSDITTYMSRCQSCRVESGCFMVYERPNFMGMQFFLRRGEYHDMQRMMSMGMMFDSIRSCRYPYRAFRMRIYEREYFGGQMSELMGDCDSIMDRFRMSDCMYCHVMDGHWLMYEQAHYRGKMMYLRPGEYRSFRDMGMSGMRFMSMRRITDMC</sequence>
<gene>
    <name type="primary">GM1</name>
</gene>
<accession>P48648</accession>
<protein>
    <recommendedName>
        <fullName>Gamma-crystallin M1</fullName>
        <shortName>Gamma-M1</shortName>
    </recommendedName>
</protein>
<keyword id="KW-0273">Eye lens protein</keyword>
<keyword id="KW-0677">Repeat</keyword>